<dbReference type="EC" id="5.4.99.27" evidence="1"/>
<dbReference type="EMBL" id="BX571861">
    <property type="protein sequence ID" value="CAE13010.1"/>
    <property type="molecule type" value="Genomic_DNA"/>
</dbReference>
<dbReference type="RefSeq" id="WP_011145091.1">
    <property type="nucleotide sequence ID" value="NC_005126.1"/>
</dbReference>
<dbReference type="SMR" id="Q7N8K5"/>
<dbReference type="STRING" id="243265.plu0715"/>
<dbReference type="GeneID" id="48847010"/>
<dbReference type="KEGG" id="plu:plu0715"/>
<dbReference type="eggNOG" id="COG0585">
    <property type="taxonomic scope" value="Bacteria"/>
</dbReference>
<dbReference type="HOGENOM" id="CLU_005281_4_0_6"/>
<dbReference type="OrthoDB" id="1550679at2"/>
<dbReference type="Proteomes" id="UP000002514">
    <property type="component" value="Chromosome"/>
</dbReference>
<dbReference type="GO" id="GO:0005829">
    <property type="term" value="C:cytosol"/>
    <property type="evidence" value="ECO:0007669"/>
    <property type="project" value="TreeGrafter"/>
</dbReference>
<dbReference type="GO" id="GO:0003723">
    <property type="term" value="F:RNA binding"/>
    <property type="evidence" value="ECO:0007669"/>
    <property type="project" value="InterPro"/>
</dbReference>
<dbReference type="GO" id="GO:0160150">
    <property type="term" value="F:tRNA pseudouridine(13) synthase activity"/>
    <property type="evidence" value="ECO:0007669"/>
    <property type="project" value="UniProtKB-EC"/>
</dbReference>
<dbReference type="GO" id="GO:0031119">
    <property type="term" value="P:tRNA pseudouridine synthesis"/>
    <property type="evidence" value="ECO:0007669"/>
    <property type="project" value="UniProtKB-UniRule"/>
</dbReference>
<dbReference type="CDD" id="cd02575">
    <property type="entry name" value="PseudoU_synth_EcTruD"/>
    <property type="match status" value="1"/>
</dbReference>
<dbReference type="FunFam" id="3.30.2350.20:FF:000001">
    <property type="entry name" value="tRNA pseudouridine synthase D"/>
    <property type="match status" value="1"/>
</dbReference>
<dbReference type="Gene3D" id="3.30.2350.20">
    <property type="entry name" value="TruD, catalytic domain"/>
    <property type="match status" value="1"/>
</dbReference>
<dbReference type="Gene3D" id="3.30.2340.10">
    <property type="entry name" value="TruD, insertion domain"/>
    <property type="match status" value="1"/>
</dbReference>
<dbReference type="HAMAP" id="MF_01082">
    <property type="entry name" value="TruD"/>
    <property type="match status" value="1"/>
</dbReference>
<dbReference type="InterPro" id="IPR020103">
    <property type="entry name" value="PsdUridine_synth_cat_dom_sf"/>
</dbReference>
<dbReference type="InterPro" id="IPR001656">
    <property type="entry name" value="PsdUridine_synth_TruD"/>
</dbReference>
<dbReference type="InterPro" id="IPR020119">
    <property type="entry name" value="PsdUridine_synth_TruD_CS"/>
</dbReference>
<dbReference type="InterPro" id="IPR011760">
    <property type="entry name" value="PsdUridine_synth_TruD_insert"/>
</dbReference>
<dbReference type="InterPro" id="IPR042214">
    <property type="entry name" value="TruD_catalytic"/>
</dbReference>
<dbReference type="InterPro" id="IPR043165">
    <property type="entry name" value="TruD_insert_sf"/>
</dbReference>
<dbReference type="InterPro" id="IPR050170">
    <property type="entry name" value="TruD_pseudoU_synthase"/>
</dbReference>
<dbReference type="NCBIfam" id="NF002155">
    <property type="entry name" value="PRK00984.1-4"/>
    <property type="match status" value="1"/>
</dbReference>
<dbReference type="NCBIfam" id="TIGR00094">
    <property type="entry name" value="tRNA_TruD_broad"/>
    <property type="match status" value="1"/>
</dbReference>
<dbReference type="PANTHER" id="PTHR47811">
    <property type="entry name" value="TRNA PSEUDOURIDINE SYNTHASE D"/>
    <property type="match status" value="1"/>
</dbReference>
<dbReference type="PANTHER" id="PTHR47811:SF1">
    <property type="entry name" value="TRNA PSEUDOURIDINE SYNTHASE D"/>
    <property type="match status" value="1"/>
</dbReference>
<dbReference type="Pfam" id="PF01142">
    <property type="entry name" value="TruD"/>
    <property type="match status" value="2"/>
</dbReference>
<dbReference type="SUPFAM" id="SSF55120">
    <property type="entry name" value="Pseudouridine synthase"/>
    <property type="match status" value="1"/>
</dbReference>
<dbReference type="PROSITE" id="PS50984">
    <property type="entry name" value="TRUD"/>
    <property type="match status" value="1"/>
</dbReference>
<dbReference type="PROSITE" id="PS01268">
    <property type="entry name" value="UPF0024"/>
    <property type="match status" value="1"/>
</dbReference>
<feature type="chain" id="PRO_0000152513" description="tRNA pseudouridine synthase D">
    <location>
        <begin position="1"/>
        <end position="349"/>
    </location>
</feature>
<feature type="domain" description="TRUD" evidence="1">
    <location>
        <begin position="154"/>
        <end position="302"/>
    </location>
</feature>
<feature type="active site" description="Nucleophile" evidence="1">
    <location>
        <position position="79"/>
    </location>
</feature>
<feature type="binding site" evidence="1">
    <location>
        <position position="26"/>
    </location>
    <ligand>
        <name>substrate</name>
    </ligand>
</feature>
<feature type="binding site" evidence="1">
    <location>
        <position position="128"/>
    </location>
    <ligand>
        <name>substrate</name>
    </ligand>
</feature>
<feature type="binding site" evidence="1">
    <location>
        <position position="328"/>
    </location>
    <ligand>
        <name>substrate</name>
    </ligand>
</feature>
<protein>
    <recommendedName>
        <fullName evidence="1">tRNA pseudouridine synthase D</fullName>
        <ecNumber evidence="1">5.4.99.27</ecNumber>
    </recommendedName>
    <alternativeName>
        <fullName evidence="1">tRNA pseudouridine(13) synthase</fullName>
    </alternativeName>
    <alternativeName>
        <fullName evidence="1">tRNA pseudouridylate synthase D</fullName>
    </alternativeName>
    <alternativeName>
        <fullName evidence="1">tRNA-uridine isomerase D</fullName>
    </alternativeName>
</protein>
<reference key="1">
    <citation type="journal article" date="2003" name="Nat. Biotechnol.">
        <title>The genome sequence of the entomopathogenic bacterium Photorhabdus luminescens.</title>
        <authorList>
            <person name="Duchaud E."/>
            <person name="Rusniok C."/>
            <person name="Frangeul L."/>
            <person name="Buchrieser C."/>
            <person name="Givaudan A."/>
            <person name="Taourit S."/>
            <person name="Bocs S."/>
            <person name="Boursaux-Eude C."/>
            <person name="Chandler M."/>
            <person name="Charles J.-F."/>
            <person name="Dassa E."/>
            <person name="Derose R."/>
            <person name="Derzelle S."/>
            <person name="Freyssinet G."/>
            <person name="Gaudriault S."/>
            <person name="Medigue C."/>
            <person name="Lanois A."/>
            <person name="Powell K."/>
            <person name="Siguier P."/>
            <person name="Vincent R."/>
            <person name="Wingate V."/>
            <person name="Zouine M."/>
            <person name="Glaser P."/>
            <person name="Boemare N."/>
            <person name="Danchin A."/>
            <person name="Kunst F."/>
        </authorList>
    </citation>
    <scope>NUCLEOTIDE SEQUENCE [LARGE SCALE GENOMIC DNA]</scope>
    <source>
        <strain>DSM 15139 / CIP 105565 / TT01</strain>
    </source>
</reference>
<evidence type="ECO:0000255" key="1">
    <source>
        <dbReference type="HAMAP-Rule" id="MF_01082"/>
    </source>
</evidence>
<name>TRUD_PHOLL</name>
<proteinExistence type="inferred from homology"/>
<gene>
    <name evidence="1" type="primary">truD</name>
    <name type="ordered locus">plu0715</name>
</gene>
<keyword id="KW-0413">Isomerase</keyword>
<keyword id="KW-1185">Reference proteome</keyword>
<keyword id="KW-0819">tRNA processing</keyword>
<comment type="function">
    <text evidence="1">Responsible for synthesis of pseudouridine from uracil-13 in transfer RNAs.</text>
</comment>
<comment type="catalytic activity">
    <reaction evidence="1">
        <text>uridine(13) in tRNA = pseudouridine(13) in tRNA</text>
        <dbReference type="Rhea" id="RHEA:42540"/>
        <dbReference type="Rhea" id="RHEA-COMP:10105"/>
        <dbReference type="Rhea" id="RHEA-COMP:10106"/>
        <dbReference type="ChEBI" id="CHEBI:65314"/>
        <dbReference type="ChEBI" id="CHEBI:65315"/>
        <dbReference type="EC" id="5.4.99.27"/>
    </reaction>
</comment>
<comment type="similarity">
    <text evidence="1">Belongs to the pseudouridine synthase TruD family.</text>
</comment>
<organism>
    <name type="scientific">Photorhabdus laumondii subsp. laumondii (strain DSM 15139 / CIP 105565 / TT01)</name>
    <name type="common">Photorhabdus luminescens subsp. laumondii</name>
    <dbReference type="NCBI Taxonomy" id="243265"/>
    <lineage>
        <taxon>Bacteria</taxon>
        <taxon>Pseudomonadati</taxon>
        <taxon>Pseudomonadota</taxon>
        <taxon>Gammaproteobacteria</taxon>
        <taxon>Enterobacterales</taxon>
        <taxon>Morganellaceae</taxon>
        <taxon>Photorhabdus</taxon>
    </lineage>
</organism>
<accession>Q7N8K5</accession>
<sequence>MVLAELNWLYGQPEATGILKASPEDFIVCEDLGFSPDGEGEHLMVHIRKTGCNTQFVADSLARFAGIPSRSVSYAGLKDRHAVTEQWFCLHLPGKQEPDFASFQLEGCEILTTARQKRKLRIGALKGNSFTLILREISHHQLVENRLRLIQQGGVPNYFGEQRFGRDGQNLIQAQRWANNEIRVKERSKRSFYLSASRSAMFNAVASARIALKQQQQVIKGDALQLTGRGSWFVADETELPLLQQRVIDGELQITAPLPGDGELGTQHQAADFERQYLQPYESLWELIKRERVEGCRRAILVQPQNLSWQWQDNDTVKISFWLPAGSFATSVVREIINQDQNNVTNIVE</sequence>